<protein>
    <recommendedName>
        <fullName>C-type lectin domain family 17, member A</fullName>
    </recommendedName>
    <alternativeName>
        <fullName>Prolectin</fullName>
    </alternativeName>
</protein>
<accession>Q6ZS10</accession>
<accession>A8MX68</accession>
<accession>B2RTX0</accession>
<accession>B7ZMM4</accession>
<gene>
    <name type="primary">CLEC17A</name>
</gene>
<sequence length="378" mass="42935">MHNLYSITGYPDPPGTMEEEEEDDDYENSTPPYKDLPPKPGTMEEEEEDDDYENSTPPYKDLPPKPGTMEEEEEDDDYENSTPPYKDLPPKPGSSAPPRPPRAAKETEKPPLPCKPRNMTGLDLAAVTCPPPQLAVNLEPSPLQPSLAATPVPWLNQRSGGPGCCQKRWMVYLCLLVVTSLFLGCLGLTVTLIKYQELMEELRMLSFQQMTWRTNMTGMAGLAGLKHDIARVRADTNQSLVELWGLLDCRRITCPEGWLPFEGKCYYFSPSTKSWDEARMFCQENYSHLVIINSFAEHNFVAKAHGSPRVYWLGLNDRAQEGDWRWLDGSPVTLSFWEPEEPNNIHDEDCATMNKGGTWNDLSCYKTTYWICERKCSC</sequence>
<evidence type="ECO:0000250" key="1"/>
<evidence type="ECO:0000255" key="2"/>
<evidence type="ECO:0000255" key="3">
    <source>
        <dbReference type="PROSITE-ProRule" id="PRU00040"/>
    </source>
</evidence>
<evidence type="ECO:0000256" key="4">
    <source>
        <dbReference type="SAM" id="MobiDB-lite"/>
    </source>
</evidence>
<evidence type="ECO:0000269" key="5">
    <source>
    </source>
</evidence>
<evidence type="ECO:0000303" key="6">
    <source>
    </source>
</evidence>
<evidence type="ECO:0000303" key="7">
    <source>
    </source>
</evidence>
<evidence type="ECO:0000305" key="8"/>
<reference key="1">
    <citation type="journal article" date="2009" name="J. Biol. Chem.">
        <title>Prolectin, a glycan-binding receptor on dividing B cells in germinal centers.</title>
        <authorList>
            <person name="Graham S.A."/>
            <person name="Jegouzo S.A."/>
            <person name="Yan S."/>
            <person name="Powlesland A.S."/>
            <person name="Brady J.P."/>
            <person name="Taylor M.E."/>
            <person name="Drickamer K."/>
        </authorList>
    </citation>
    <scope>NUCLEOTIDE SEQUENCE [LARGE SCALE MRNA] (ISOFORM 1)</scope>
    <scope>FUNCTION</scope>
    <scope>SUBUNIT</scope>
    <scope>SUBCELLULAR LOCATION</scope>
    <scope>TISSUE SPECIFICITY</scope>
    <scope>PHOSPHORYLATION</scope>
    <source>
        <tissue>Spleen</tissue>
    </source>
</reference>
<reference key="2">
    <citation type="journal article" date="2004" name="Nat. Genet.">
        <title>Complete sequencing and characterization of 21,243 full-length human cDNAs.</title>
        <authorList>
            <person name="Ota T."/>
            <person name="Suzuki Y."/>
            <person name="Nishikawa T."/>
            <person name="Otsuki T."/>
            <person name="Sugiyama T."/>
            <person name="Irie R."/>
            <person name="Wakamatsu A."/>
            <person name="Hayashi K."/>
            <person name="Sato H."/>
            <person name="Nagai K."/>
            <person name="Kimura K."/>
            <person name="Makita H."/>
            <person name="Sekine M."/>
            <person name="Obayashi M."/>
            <person name="Nishi T."/>
            <person name="Shibahara T."/>
            <person name="Tanaka T."/>
            <person name="Ishii S."/>
            <person name="Yamamoto J."/>
            <person name="Saito K."/>
            <person name="Kawai Y."/>
            <person name="Isono Y."/>
            <person name="Nakamura Y."/>
            <person name="Nagahari K."/>
            <person name="Murakami K."/>
            <person name="Yasuda T."/>
            <person name="Iwayanagi T."/>
            <person name="Wagatsuma M."/>
            <person name="Shiratori A."/>
            <person name="Sudo H."/>
            <person name="Hosoiri T."/>
            <person name="Kaku Y."/>
            <person name="Kodaira H."/>
            <person name="Kondo H."/>
            <person name="Sugawara M."/>
            <person name="Takahashi M."/>
            <person name="Kanda K."/>
            <person name="Yokoi T."/>
            <person name="Furuya T."/>
            <person name="Kikkawa E."/>
            <person name="Omura Y."/>
            <person name="Abe K."/>
            <person name="Kamihara K."/>
            <person name="Katsuta N."/>
            <person name="Sato K."/>
            <person name="Tanikawa M."/>
            <person name="Yamazaki M."/>
            <person name="Ninomiya K."/>
            <person name="Ishibashi T."/>
            <person name="Yamashita H."/>
            <person name="Murakawa K."/>
            <person name="Fujimori K."/>
            <person name="Tanai H."/>
            <person name="Kimata M."/>
            <person name="Watanabe M."/>
            <person name="Hiraoka S."/>
            <person name="Chiba Y."/>
            <person name="Ishida S."/>
            <person name="Ono Y."/>
            <person name="Takiguchi S."/>
            <person name="Watanabe S."/>
            <person name="Yosida M."/>
            <person name="Hotuta T."/>
            <person name="Kusano J."/>
            <person name="Kanehori K."/>
            <person name="Takahashi-Fujii A."/>
            <person name="Hara H."/>
            <person name="Tanase T.-O."/>
            <person name="Nomura Y."/>
            <person name="Togiya S."/>
            <person name="Komai F."/>
            <person name="Hara R."/>
            <person name="Takeuchi K."/>
            <person name="Arita M."/>
            <person name="Imose N."/>
            <person name="Musashino K."/>
            <person name="Yuuki H."/>
            <person name="Oshima A."/>
            <person name="Sasaki N."/>
            <person name="Aotsuka S."/>
            <person name="Yoshikawa Y."/>
            <person name="Matsunawa H."/>
            <person name="Ichihara T."/>
            <person name="Shiohata N."/>
            <person name="Sano S."/>
            <person name="Moriya S."/>
            <person name="Momiyama H."/>
            <person name="Satoh N."/>
            <person name="Takami S."/>
            <person name="Terashima Y."/>
            <person name="Suzuki O."/>
            <person name="Nakagawa S."/>
            <person name="Senoh A."/>
            <person name="Mizoguchi H."/>
            <person name="Goto Y."/>
            <person name="Shimizu F."/>
            <person name="Wakebe H."/>
            <person name="Hishigaki H."/>
            <person name="Watanabe T."/>
            <person name="Sugiyama A."/>
            <person name="Takemoto M."/>
            <person name="Kawakami B."/>
            <person name="Yamazaki M."/>
            <person name="Watanabe K."/>
            <person name="Kumagai A."/>
            <person name="Itakura S."/>
            <person name="Fukuzumi Y."/>
            <person name="Fujimori Y."/>
            <person name="Komiyama M."/>
            <person name="Tashiro H."/>
            <person name="Tanigami A."/>
            <person name="Fujiwara T."/>
            <person name="Ono T."/>
            <person name="Yamada K."/>
            <person name="Fujii Y."/>
            <person name="Ozaki K."/>
            <person name="Hirao M."/>
            <person name="Ohmori Y."/>
            <person name="Kawabata A."/>
            <person name="Hikiji T."/>
            <person name="Kobatake N."/>
            <person name="Inagaki H."/>
            <person name="Ikema Y."/>
            <person name="Okamoto S."/>
            <person name="Okitani R."/>
            <person name="Kawakami T."/>
            <person name="Noguchi S."/>
            <person name="Itoh T."/>
            <person name="Shigeta K."/>
            <person name="Senba T."/>
            <person name="Matsumura K."/>
            <person name="Nakajima Y."/>
            <person name="Mizuno T."/>
            <person name="Morinaga M."/>
            <person name="Sasaki M."/>
            <person name="Togashi T."/>
            <person name="Oyama M."/>
            <person name="Hata H."/>
            <person name="Watanabe M."/>
            <person name="Komatsu T."/>
            <person name="Mizushima-Sugano J."/>
            <person name="Satoh T."/>
            <person name="Shirai Y."/>
            <person name="Takahashi Y."/>
            <person name="Nakagawa K."/>
            <person name="Okumura K."/>
            <person name="Nagase T."/>
            <person name="Nomura N."/>
            <person name="Kikuchi H."/>
            <person name="Masuho Y."/>
            <person name="Yamashita R."/>
            <person name="Nakai K."/>
            <person name="Yada T."/>
            <person name="Nakamura Y."/>
            <person name="Ohara O."/>
            <person name="Isogai T."/>
            <person name="Sugano S."/>
        </authorList>
    </citation>
    <scope>NUCLEOTIDE SEQUENCE [LARGE SCALE MRNA] (ISOFORM 3)</scope>
    <source>
        <tissue>Peripheral blood monocyte</tissue>
    </source>
</reference>
<reference key="3">
    <citation type="journal article" date="2004" name="Nature">
        <title>The DNA sequence and biology of human chromosome 19.</title>
        <authorList>
            <person name="Grimwood J."/>
            <person name="Gordon L.A."/>
            <person name="Olsen A.S."/>
            <person name="Terry A."/>
            <person name="Schmutz J."/>
            <person name="Lamerdin J.E."/>
            <person name="Hellsten U."/>
            <person name="Goodstein D."/>
            <person name="Couronne O."/>
            <person name="Tran-Gyamfi M."/>
            <person name="Aerts A."/>
            <person name="Altherr M."/>
            <person name="Ashworth L."/>
            <person name="Bajorek E."/>
            <person name="Black S."/>
            <person name="Branscomb E."/>
            <person name="Caenepeel S."/>
            <person name="Carrano A.V."/>
            <person name="Caoile C."/>
            <person name="Chan Y.M."/>
            <person name="Christensen M."/>
            <person name="Cleland C.A."/>
            <person name="Copeland A."/>
            <person name="Dalin E."/>
            <person name="Dehal P."/>
            <person name="Denys M."/>
            <person name="Detter J.C."/>
            <person name="Escobar J."/>
            <person name="Flowers D."/>
            <person name="Fotopulos D."/>
            <person name="Garcia C."/>
            <person name="Georgescu A.M."/>
            <person name="Glavina T."/>
            <person name="Gomez M."/>
            <person name="Gonzales E."/>
            <person name="Groza M."/>
            <person name="Hammon N."/>
            <person name="Hawkins T."/>
            <person name="Haydu L."/>
            <person name="Ho I."/>
            <person name="Huang W."/>
            <person name="Israni S."/>
            <person name="Jett J."/>
            <person name="Kadner K."/>
            <person name="Kimball H."/>
            <person name="Kobayashi A."/>
            <person name="Larionov V."/>
            <person name="Leem S.-H."/>
            <person name="Lopez F."/>
            <person name="Lou Y."/>
            <person name="Lowry S."/>
            <person name="Malfatti S."/>
            <person name="Martinez D."/>
            <person name="McCready P.M."/>
            <person name="Medina C."/>
            <person name="Morgan J."/>
            <person name="Nelson K."/>
            <person name="Nolan M."/>
            <person name="Ovcharenko I."/>
            <person name="Pitluck S."/>
            <person name="Pollard M."/>
            <person name="Popkie A.P."/>
            <person name="Predki P."/>
            <person name="Quan G."/>
            <person name="Ramirez L."/>
            <person name="Rash S."/>
            <person name="Retterer J."/>
            <person name="Rodriguez A."/>
            <person name="Rogers S."/>
            <person name="Salamov A."/>
            <person name="Salazar A."/>
            <person name="She X."/>
            <person name="Smith D."/>
            <person name="Slezak T."/>
            <person name="Solovyev V."/>
            <person name="Thayer N."/>
            <person name="Tice H."/>
            <person name="Tsai M."/>
            <person name="Ustaszewska A."/>
            <person name="Vo N."/>
            <person name="Wagner M."/>
            <person name="Wheeler J."/>
            <person name="Wu K."/>
            <person name="Xie G."/>
            <person name="Yang J."/>
            <person name="Dubchak I."/>
            <person name="Furey T.S."/>
            <person name="DeJong P."/>
            <person name="Dickson M."/>
            <person name="Gordon D."/>
            <person name="Eichler E.E."/>
            <person name="Pennacchio L.A."/>
            <person name="Richardson P."/>
            <person name="Stubbs L."/>
            <person name="Rokhsar D.S."/>
            <person name="Myers R.M."/>
            <person name="Rubin E.M."/>
            <person name="Lucas S.M."/>
        </authorList>
    </citation>
    <scope>NUCLEOTIDE SEQUENCE [LARGE SCALE GENOMIC DNA]</scope>
</reference>
<reference key="4">
    <citation type="submission" date="2005-07" db="EMBL/GenBank/DDBJ databases">
        <authorList>
            <person name="Mural R.J."/>
            <person name="Istrail S."/>
            <person name="Sutton G.G."/>
            <person name="Florea L."/>
            <person name="Halpern A.L."/>
            <person name="Mobarry C.M."/>
            <person name="Lippert R."/>
            <person name="Walenz B."/>
            <person name="Shatkay H."/>
            <person name="Dew I."/>
            <person name="Miller J.R."/>
            <person name="Flanigan M.J."/>
            <person name="Edwards N.J."/>
            <person name="Bolanos R."/>
            <person name="Fasulo D."/>
            <person name="Halldorsson B.V."/>
            <person name="Hannenhalli S."/>
            <person name="Turner R."/>
            <person name="Yooseph S."/>
            <person name="Lu F."/>
            <person name="Nusskern D.R."/>
            <person name="Shue B.C."/>
            <person name="Zheng X.H."/>
            <person name="Zhong F."/>
            <person name="Delcher A.L."/>
            <person name="Huson D.H."/>
            <person name="Kravitz S.A."/>
            <person name="Mouchard L."/>
            <person name="Reinert K."/>
            <person name="Remington K.A."/>
            <person name="Clark A.G."/>
            <person name="Waterman M.S."/>
            <person name="Eichler E.E."/>
            <person name="Adams M.D."/>
            <person name="Hunkapiller M.W."/>
            <person name="Myers E.W."/>
            <person name="Venter J.C."/>
        </authorList>
    </citation>
    <scope>NUCLEOTIDE SEQUENCE [LARGE SCALE GENOMIC DNA]</scope>
</reference>
<reference key="5">
    <citation type="journal article" date="2004" name="Genome Res.">
        <title>The status, quality, and expansion of the NIH full-length cDNA project: the Mammalian Gene Collection (MGC).</title>
        <authorList>
            <consortium name="The MGC Project Team"/>
        </authorList>
    </citation>
    <scope>NUCLEOTIDE SEQUENCE [LARGE SCALE MRNA] (ISOFORMS 1 AND 2)</scope>
</reference>
<organism>
    <name type="scientific">Homo sapiens</name>
    <name type="common">Human</name>
    <dbReference type="NCBI Taxonomy" id="9606"/>
    <lineage>
        <taxon>Eukaryota</taxon>
        <taxon>Metazoa</taxon>
        <taxon>Chordata</taxon>
        <taxon>Craniata</taxon>
        <taxon>Vertebrata</taxon>
        <taxon>Euteleostomi</taxon>
        <taxon>Mammalia</taxon>
        <taxon>Eutheria</taxon>
        <taxon>Euarchontoglires</taxon>
        <taxon>Primates</taxon>
        <taxon>Haplorrhini</taxon>
        <taxon>Catarrhini</taxon>
        <taxon>Hominidae</taxon>
        <taxon>Homo</taxon>
    </lineage>
</organism>
<comment type="function">
    <text evidence="5">Cell surface receptor which may be involved in carbohydrate-mediated communication between cells in the germinal center. Binds glycans with terminal alpha-linked mannose or fucose residues.</text>
</comment>
<comment type="subunit">
    <text evidence="5">Oligomer; disulfide-linked.</text>
</comment>
<comment type="interaction">
    <interactant intactId="EBI-11977093">
        <id>Q6ZS10</id>
    </interactant>
    <interactant intactId="EBI-12808270">
        <id>P07307-3</id>
        <label>ASGR2</label>
    </interactant>
    <organismsDiffer>false</organismsDiffer>
    <experiments>3</experiments>
</comment>
<comment type="interaction">
    <interactant intactId="EBI-11977093">
        <id>Q6ZS10</id>
    </interactant>
    <interactant intactId="EBI-721179">
        <id>P27449</id>
        <label>ATP6V0C</label>
    </interactant>
    <organismsDiffer>false</organismsDiffer>
    <experiments>3</experiments>
</comment>
<comment type="interaction">
    <interactant intactId="EBI-11977093">
        <id>Q6ZS10</id>
    </interactant>
    <interactant intactId="EBI-10215641">
        <id>P56748</id>
        <label>CLDN8</label>
    </interactant>
    <organismsDiffer>false</organismsDiffer>
    <experiments>3</experiments>
</comment>
<comment type="interaction">
    <interactant intactId="EBI-11977093">
        <id>Q6ZS10</id>
    </interactant>
    <interactant intactId="EBI-11977093">
        <id>Q6ZS10</id>
        <label>CLEC17A</label>
    </interactant>
    <organismsDiffer>false</organismsDiffer>
    <experiments>3</experiments>
</comment>
<comment type="interaction">
    <interactant intactId="EBI-11977093">
        <id>Q6ZS10</id>
    </interactant>
    <interactant intactId="EBI-12019274">
        <id>Q4LDR2</id>
        <label>CTXN3</label>
    </interactant>
    <organismsDiffer>false</organismsDiffer>
    <experiments>3</experiments>
</comment>
<comment type="interaction">
    <interactant intactId="EBI-11977093">
        <id>Q6ZS10</id>
    </interactant>
    <interactant intactId="EBI-3911467">
        <id>Q07325</id>
        <label>CXCL9</label>
    </interactant>
    <organismsDiffer>false</organismsDiffer>
    <experiments>3</experiments>
</comment>
<comment type="interaction">
    <interactant intactId="EBI-11977093">
        <id>Q6ZS10</id>
    </interactant>
    <interactant intactId="EBI-2876774">
        <id>Q92520</id>
        <label>FAM3C</label>
    </interactant>
    <organismsDiffer>false</organismsDiffer>
    <experiments>3</experiments>
</comment>
<comment type="interaction">
    <interactant intactId="EBI-11977093">
        <id>Q6ZS10</id>
    </interactant>
    <interactant intactId="EBI-13345167">
        <id>Q8TDT2</id>
        <label>GPR152</label>
    </interactant>
    <organismsDiffer>false</organismsDiffer>
    <experiments>3</experiments>
</comment>
<comment type="interaction">
    <interactant intactId="EBI-11977093">
        <id>Q6ZS10</id>
    </interactant>
    <interactant intactId="EBI-720480">
        <id>P24593</id>
        <label>IGFBP5</label>
    </interactant>
    <organismsDiffer>false</organismsDiffer>
    <experiments>4</experiments>
</comment>
<comment type="interaction">
    <interactant intactId="EBI-11977093">
        <id>Q6ZS10</id>
    </interactant>
    <interactant intactId="EBI-713635">
        <id>O43639</id>
        <label>NCK2</label>
    </interactant>
    <organismsDiffer>false</organismsDiffer>
    <experiments>3</experiments>
</comment>
<comment type="interaction">
    <interactant intactId="EBI-11977093">
        <id>Q6ZS10</id>
    </interactant>
    <interactant intactId="EBI-10317425">
        <id>Q9NZG7</id>
        <label>NINJ2</label>
    </interactant>
    <organismsDiffer>false</organismsDiffer>
    <experiments>3</experiments>
</comment>
<comment type="interaction">
    <interactant intactId="EBI-11977093">
        <id>Q6ZS10</id>
    </interactant>
    <interactant intactId="EBI-2804156">
        <id>Q6UX06</id>
        <label>OLFM4</label>
    </interactant>
    <organismsDiffer>false</organismsDiffer>
    <experiments>3</experiments>
</comment>
<comment type="interaction">
    <interactant intactId="EBI-11977093">
        <id>Q6ZS10</id>
    </interactant>
    <interactant intactId="EBI-448369">
        <id>Q96FA3</id>
        <label>PELI1</label>
    </interactant>
    <organismsDiffer>false</organismsDiffer>
    <experiments>3</experiments>
</comment>
<comment type="interaction">
    <interactant intactId="EBI-11977093">
        <id>Q6ZS10</id>
    </interactant>
    <interactant intactId="EBI-448407">
        <id>Q9HAT8</id>
        <label>PELI2</label>
    </interactant>
    <organismsDiffer>false</organismsDiffer>
    <experiments>3</experiments>
</comment>
<comment type="interaction">
    <interactant intactId="EBI-11977093">
        <id>Q6ZS10</id>
    </interactant>
    <interactant intactId="EBI-1052363">
        <id>Q9NS64</id>
        <label>RPRM</label>
    </interactant>
    <organismsDiffer>false</organismsDiffer>
    <experiments>4</experiments>
</comment>
<comment type="interaction">
    <interactant intactId="EBI-11977093">
        <id>Q6ZS10</id>
    </interactant>
    <interactant intactId="EBI-81088">
        <id>Q15436</id>
        <label>SEC23A</label>
    </interactant>
    <organismsDiffer>false</organismsDiffer>
    <experiments>3</experiments>
</comment>
<comment type="interaction">
    <interactant intactId="EBI-11977093">
        <id>Q6ZS10</id>
    </interactant>
    <interactant intactId="EBI-741850">
        <id>Q9BZL3</id>
        <label>SMIM3</label>
    </interactant>
    <organismsDiffer>false</organismsDiffer>
    <experiments>6</experiments>
</comment>
<comment type="interaction">
    <interactant intactId="EBI-11977093">
        <id>Q6ZS10</id>
    </interactant>
    <interactant intactId="EBI-8650934">
        <id>P48230</id>
        <label>TM4SF4</label>
    </interactant>
    <organismsDiffer>false</organismsDiffer>
    <experiments>3</experiments>
</comment>
<comment type="interaction">
    <interactant intactId="EBI-11977093">
        <id>Q6ZS10</id>
    </interactant>
    <interactant intactId="EBI-2844246">
        <id>Q9NV12</id>
        <label>TMEM140</label>
    </interactant>
    <organismsDiffer>false</organismsDiffer>
    <experiments>3</experiments>
</comment>
<comment type="interaction">
    <interactant intactId="EBI-11977093">
        <id>Q6ZS10</id>
    </interactant>
    <interactant intactId="EBI-11994282">
        <id>Q5SNT2-2</id>
        <label>TMEM201</label>
    </interactant>
    <organismsDiffer>false</organismsDiffer>
    <experiments>3</experiments>
</comment>
<comment type="interaction">
    <interactant intactId="EBI-11977093">
        <id>Q6ZS10</id>
    </interactant>
    <interactant intactId="EBI-10173151">
        <id>A2RU14</id>
        <label>TMEM218</label>
    </interactant>
    <organismsDiffer>false</organismsDiffer>
    <experiments>3</experiments>
</comment>
<comment type="interaction">
    <interactant intactId="EBI-11977093">
        <id>Q6ZS10</id>
    </interactant>
    <interactant intactId="EBI-10179682">
        <id>O00526</id>
        <label>UPK2</label>
    </interactant>
    <organismsDiffer>false</organismsDiffer>
    <experiments>3</experiments>
</comment>
<comment type="subcellular location">
    <subcellularLocation>
        <location evidence="8">Membrane</location>
        <topology evidence="8">Single-pass type II membrane protein</topology>
    </subcellularLocation>
    <text evidence="5">In fibroblasts, expressed on the cell surface.</text>
</comment>
<comment type="alternative products">
    <event type="alternative splicing"/>
    <isoform>
        <id>Q6ZS10-1</id>
        <name>1</name>
        <sequence type="displayed"/>
    </isoform>
    <isoform>
        <id>Q6ZS10-2</id>
        <name>2</name>
        <sequence type="described" ref="VSP_039405 VSP_039406"/>
    </isoform>
    <isoform>
        <id>Q6ZS10-3</id>
        <name>3</name>
        <sequence type="described" ref="VSP_039407 VSP_039408"/>
    </isoform>
</comment>
<comment type="tissue specificity">
    <text evidence="5">Expressed on dividing B-cells of germinal centers in various tissues, including lymph nodes, tonsils, stomach, intestine, appendix and spleen.</text>
</comment>
<comment type="PTM">
    <text evidence="5">Phosphorylated on tyrosine residues.</text>
</comment>
<comment type="miscellaneous">
    <molecule>Isoform 2</molecule>
    <text evidence="8">May be produced at very low levels due to a premature stop codon in the mRNA, leading to nonsense-mediated mRNA decay.</text>
</comment>
<comment type="sequence caution" evidence="8">
    <conflict type="erroneous gene model prediction">
        <sequence resource="EMBL-CDS" id="EAW84437"/>
    </conflict>
</comment>
<proteinExistence type="evidence at protein level"/>
<dbReference type="EMBL" id="AK127809">
    <property type="protein sequence ID" value="BAC87146.1"/>
    <property type="molecule type" value="mRNA"/>
</dbReference>
<dbReference type="EMBL" id="AC010527">
    <property type="status" value="NOT_ANNOTATED_CDS"/>
    <property type="molecule type" value="Genomic_DNA"/>
</dbReference>
<dbReference type="EMBL" id="AC140008">
    <property type="status" value="NOT_ANNOTATED_CDS"/>
    <property type="molecule type" value="Genomic_DNA"/>
</dbReference>
<dbReference type="EMBL" id="CH471106">
    <property type="protein sequence ID" value="EAW84437.1"/>
    <property type="status" value="ALT_SEQ"/>
    <property type="molecule type" value="Genomic_DNA"/>
</dbReference>
<dbReference type="EMBL" id="BC140848">
    <property type="protein sequence ID" value="AAI40849.1"/>
    <property type="molecule type" value="mRNA"/>
</dbReference>
<dbReference type="EMBL" id="BC144665">
    <property type="protein sequence ID" value="AAI44666.1"/>
    <property type="molecule type" value="mRNA"/>
</dbReference>
<dbReference type="CCDS" id="CCDS46002.2">
    <molecule id="Q6ZS10-3"/>
</dbReference>
<dbReference type="CCDS" id="CCDS56087.1">
    <molecule id="Q6ZS10-1"/>
</dbReference>
<dbReference type="RefSeq" id="NP_001191047.1">
    <molecule id="Q6ZS10-1"/>
    <property type="nucleotide sequence ID" value="NM_001204118.2"/>
</dbReference>
<dbReference type="RefSeq" id="NP_997273.3">
    <molecule id="Q6ZS10-3"/>
    <property type="nucleotide sequence ID" value="NM_207390.4"/>
</dbReference>
<dbReference type="SMR" id="Q6ZS10"/>
<dbReference type="BioGRID" id="132718">
    <property type="interactions" value="24"/>
</dbReference>
<dbReference type="FunCoup" id="Q6ZS10">
    <property type="interactions" value="75"/>
</dbReference>
<dbReference type="IntAct" id="Q6ZS10">
    <property type="interactions" value="22"/>
</dbReference>
<dbReference type="STRING" id="9606.ENSP00000393719"/>
<dbReference type="GlyCosmos" id="Q6ZS10">
    <property type="glycosylation" value="3 sites, No reported glycans"/>
</dbReference>
<dbReference type="GlyGen" id="Q6ZS10">
    <property type="glycosylation" value="3 sites"/>
</dbReference>
<dbReference type="iPTMnet" id="Q6ZS10"/>
<dbReference type="PhosphoSitePlus" id="Q6ZS10"/>
<dbReference type="BioMuta" id="CLEC17A"/>
<dbReference type="DMDM" id="300669632"/>
<dbReference type="MassIVE" id="Q6ZS10"/>
<dbReference type="PaxDb" id="9606-ENSP00000393719"/>
<dbReference type="PeptideAtlas" id="Q6ZS10"/>
<dbReference type="ProteomicsDB" id="68178">
    <molecule id="Q6ZS10-1"/>
</dbReference>
<dbReference type="ProteomicsDB" id="68179">
    <molecule id="Q6ZS10-2"/>
</dbReference>
<dbReference type="ProteomicsDB" id="68180">
    <molecule id="Q6ZS10-3"/>
</dbReference>
<dbReference type="Antibodypedia" id="50548">
    <property type="antibodies" value="52 antibodies from 10 providers"/>
</dbReference>
<dbReference type="DNASU" id="388512"/>
<dbReference type="Ensembl" id="ENST00000339847.9">
    <molecule id="Q6ZS10-2"/>
    <property type="protein sequence ID" value="ENSP00000341620.5"/>
    <property type="gene ID" value="ENSG00000187912.12"/>
</dbReference>
<dbReference type="Ensembl" id="ENST00000417570.6">
    <molecule id="Q6ZS10-1"/>
    <property type="protein sequence ID" value="ENSP00000393719.2"/>
    <property type="gene ID" value="ENSG00000187912.12"/>
</dbReference>
<dbReference type="Ensembl" id="ENST00000547437.5">
    <molecule id="Q6ZS10-3"/>
    <property type="protein sequence ID" value="ENSP00000450065.1"/>
    <property type="gene ID" value="ENSG00000187912.12"/>
</dbReference>
<dbReference type="GeneID" id="388512"/>
<dbReference type="KEGG" id="hsa:388512"/>
<dbReference type="MANE-Select" id="ENST00000417570.6">
    <property type="protein sequence ID" value="ENSP00000393719.2"/>
    <property type="RefSeq nucleotide sequence ID" value="NM_001204118.2"/>
    <property type="RefSeq protein sequence ID" value="NP_001191047.1"/>
</dbReference>
<dbReference type="UCSC" id="uc010dzn.3">
    <molecule id="Q6ZS10-1"/>
    <property type="organism name" value="human"/>
</dbReference>
<dbReference type="AGR" id="HGNC:34520"/>
<dbReference type="CTD" id="388512"/>
<dbReference type="DisGeNET" id="388512"/>
<dbReference type="GeneCards" id="CLEC17A"/>
<dbReference type="HGNC" id="HGNC:34520">
    <property type="gene designation" value="CLEC17A"/>
</dbReference>
<dbReference type="HPA" id="ENSG00000187912">
    <property type="expression patterns" value="Group enriched (intestine, lymphoid tissue)"/>
</dbReference>
<dbReference type="MIM" id="616838">
    <property type="type" value="gene"/>
</dbReference>
<dbReference type="neXtProt" id="NX_Q6ZS10"/>
<dbReference type="OpenTargets" id="ENSG00000187912"/>
<dbReference type="PharmGKB" id="PA164717947"/>
<dbReference type="VEuPathDB" id="HostDB:ENSG00000187912"/>
<dbReference type="eggNOG" id="KOG4297">
    <property type="taxonomic scope" value="Eukaryota"/>
</dbReference>
<dbReference type="GeneTree" id="ENSGT00940000163153"/>
<dbReference type="HOGENOM" id="CLU_063069_0_0_1"/>
<dbReference type="InParanoid" id="Q6ZS10"/>
<dbReference type="OMA" id="SFWEPEE"/>
<dbReference type="PAN-GO" id="Q6ZS10">
    <property type="GO annotations" value="4 GO annotations based on evolutionary models"/>
</dbReference>
<dbReference type="PhylomeDB" id="Q6ZS10"/>
<dbReference type="TreeFam" id="TF343491"/>
<dbReference type="PathwayCommons" id="Q6ZS10"/>
<dbReference type="SignaLink" id="Q6ZS10"/>
<dbReference type="BioGRID-ORCS" id="388512">
    <property type="hits" value="7 hits in 1139 CRISPR screens"/>
</dbReference>
<dbReference type="GenomeRNAi" id="388512"/>
<dbReference type="Pharos" id="Q6ZS10">
    <property type="development level" value="Tbio"/>
</dbReference>
<dbReference type="PRO" id="PR:Q6ZS10"/>
<dbReference type="Proteomes" id="UP000005640">
    <property type="component" value="Chromosome 19"/>
</dbReference>
<dbReference type="RNAct" id="Q6ZS10">
    <property type="molecule type" value="protein"/>
</dbReference>
<dbReference type="Bgee" id="ENSG00000187912">
    <property type="expression patterns" value="Expressed in lymph node and 73 other cell types or tissues"/>
</dbReference>
<dbReference type="ExpressionAtlas" id="Q6ZS10">
    <property type="expression patterns" value="baseline and differential"/>
</dbReference>
<dbReference type="GO" id="GO:0009986">
    <property type="term" value="C:cell surface"/>
    <property type="evidence" value="ECO:0000314"/>
    <property type="project" value="UniProtKB"/>
</dbReference>
<dbReference type="GO" id="GO:0009897">
    <property type="term" value="C:external side of plasma membrane"/>
    <property type="evidence" value="ECO:0000318"/>
    <property type="project" value="GO_Central"/>
</dbReference>
<dbReference type="GO" id="GO:0005537">
    <property type="term" value="F:D-mannose binding"/>
    <property type="evidence" value="ECO:0000314"/>
    <property type="project" value="UniProtKB"/>
</dbReference>
<dbReference type="GO" id="GO:0042806">
    <property type="term" value="F:fucose binding"/>
    <property type="evidence" value="ECO:0000314"/>
    <property type="project" value="UniProtKB"/>
</dbReference>
<dbReference type="GO" id="GO:0042802">
    <property type="term" value="F:identical protein binding"/>
    <property type="evidence" value="ECO:0000353"/>
    <property type="project" value="IntAct"/>
</dbReference>
<dbReference type="GO" id="GO:0046872">
    <property type="term" value="F:metal ion binding"/>
    <property type="evidence" value="ECO:0007669"/>
    <property type="project" value="UniProtKB-KW"/>
</dbReference>
<dbReference type="GO" id="GO:0038187">
    <property type="term" value="F:pattern recognition receptor activity"/>
    <property type="evidence" value="ECO:0000318"/>
    <property type="project" value="GO_Central"/>
</dbReference>
<dbReference type="GO" id="GO:0006955">
    <property type="term" value="P:immune response"/>
    <property type="evidence" value="ECO:0000318"/>
    <property type="project" value="GO_Central"/>
</dbReference>
<dbReference type="CDD" id="cd03590">
    <property type="entry name" value="CLECT_DC-SIGN_like"/>
    <property type="match status" value="1"/>
</dbReference>
<dbReference type="FunFam" id="3.10.100.10:FF:000070">
    <property type="entry name" value="Low affinity immunoglobulin epsilon Fc receptor"/>
    <property type="match status" value="1"/>
</dbReference>
<dbReference type="Gene3D" id="3.10.100.10">
    <property type="entry name" value="Mannose-Binding Protein A, subunit A"/>
    <property type="match status" value="1"/>
</dbReference>
<dbReference type="InterPro" id="IPR001304">
    <property type="entry name" value="C-type_lectin-like"/>
</dbReference>
<dbReference type="InterPro" id="IPR016186">
    <property type="entry name" value="C-type_lectin-like/link_sf"/>
</dbReference>
<dbReference type="InterPro" id="IPR050111">
    <property type="entry name" value="C-type_lectin/snaclec_domain"/>
</dbReference>
<dbReference type="InterPro" id="IPR018378">
    <property type="entry name" value="C-type_lectin_CS"/>
</dbReference>
<dbReference type="InterPro" id="IPR033989">
    <property type="entry name" value="CD209-like_CTLD"/>
</dbReference>
<dbReference type="InterPro" id="IPR016187">
    <property type="entry name" value="CTDL_fold"/>
</dbReference>
<dbReference type="PANTHER" id="PTHR22803">
    <property type="entry name" value="MANNOSE, PHOSPHOLIPASE, LECTIN RECEPTOR RELATED"/>
    <property type="match status" value="1"/>
</dbReference>
<dbReference type="Pfam" id="PF00059">
    <property type="entry name" value="Lectin_C"/>
    <property type="match status" value="1"/>
</dbReference>
<dbReference type="SMART" id="SM00034">
    <property type="entry name" value="CLECT"/>
    <property type="match status" value="1"/>
</dbReference>
<dbReference type="SUPFAM" id="SSF56436">
    <property type="entry name" value="C-type lectin-like"/>
    <property type="match status" value="1"/>
</dbReference>
<dbReference type="PROSITE" id="PS00615">
    <property type="entry name" value="C_TYPE_LECTIN_1"/>
    <property type="match status" value="1"/>
</dbReference>
<dbReference type="PROSITE" id="PS50041">
    <property type="entry name" value="C_TYPE_LECTIN_2"/>
    <property type="match status" value="1"/>
</dbReference>
<name>CL17A_HUMAN</name>
<keyword id="KW-0025">Alternative splicing</keyword>
<keyword id="KW-0106">Calcium</keyword>
<keyword id="KW-1015">Disulfide bond</keyword>
<keyword id="KW-0325">Glycoprotein</keyword>
<keyword id="KW-0430">Lectin</keyword>
<keyword id="KW-0465">Mannose-binding</keyword>
<keyword id="KW-0472">Membrane</keyword>
<keyword id="KW-0479">Metal-binding</keyword>
<keyword id="KW-1267">Proteomics identification</keyword>
<keyword id="KW-0675">Receptor</keyword>
<keyword id="KW-1185">Reference proteome</keyword>
<keyword id="KW-0735">Signal-anchor</keyword>
<keyword id="KW-0812">Transmembrane</keyword>
<keyword id="KW-1133">Transmembrane helix</keyword>
<feature type="chain" id="PRO_0000319428" description="C-type lectin domain family 17, member A">
    <location>
        <begin position="1"/>
        <end position="378"/>
    </location>
</feature>
<feature type="topological domain" description="Cytoplasmic" evidence="2">
    <location>
        <begin position="1"/>
        <end position="172"/>
    </location>
</feature>
<feature type="transmembrane region" description="Helical; Signal-anchor for type II membrane protein" evidence="2">
    <location>
        <begin position="173"/>
        <end position="193"/>
    </location>
</feature>
<feature type="topological domain" description="Extracellular" evidence="2">
    <location>
        <begin position="194"/>
        <end position="378"/>
    </location>
</feature>
<feature type="domain" description="C-type lectin" evidence="3">
    <location>
        <begin position="261"/>
        <end position="373"/>
    </location>
</feature>
<feature type="region of interest" description="Disordered" evidence="4">
    <location>
        <begin position="1"/>
        <end position="119"/>
    </location>
</feature>
<feature type="compositionally biased region" description="Acidic residues" evidence="4">
    <location>
        <begin position="17"/>
        <end position="27"/>
    </location>
</feature>
<feature type="compositionally biased region" description="Acidic residues" evidence="4">
    <location>
        <begin position="43"/>
        <end position="53"/>
    </location>
</feature>
<feature type="compositionally biased region" description="Acidic residues" evidence="4">
    <location>
        <begin position="69"/>
        <end position="79"/>
    </location>
</feature>
<feature type="compositionally biased region" description="Pro residues" evidence="4">
    <location>
        <begin position="86"/>
        <end position="101"/>
    </location>
</feature>
<feature type="binding site" evidence="1">
    <location>
        <position position="341"/>
    </location>
    <ligand>
        <name>Ca(2+)</name>
        <dbReference type="ChEBI" id="CHEBI:29108"/>
    </ligand>
</feature>
<feature type="binding site" evidence="1">
    <location>
        <position position="343"/>
    </location>
    <ligand>
        <name>Ca(2+)</name>
        <dbReference type="ChEBI" id="CHEBI:29108"/>
    </ligand>
</feature>
<feature type="binding site" evidence="1">
    <location>
        <position position="348"/>
    </location>
    <ligand>
        <name>Ca(2+)</name>
        <dbReference type="ChEBI" id="CHEBI:29108"/>
    </ligand>
</feature>
<feature type="binding site" evidence="1">
    <location>
        <position position="360"/>
    </location>
    <ligand>
        <name>Ca(2+)</name>
        <dbReference type="ChEBI" id="CHEBI:29108"/>
    </ligand>
</feature>
<feature type="binding site" evidence="1">
    <location>
        <position position="361"/>
    </location>
    <ligand>
        <name>Ca(2+)</name>
        <dbReference type="ChEBI" id="CHEBI:29108"/>
    </ligand>
</feature>
<feature type="glycosylation site" description="N-linked (GlcNAc...) asparagine" evidence="2">
    <location>
        <position position="215"/>
    </location>
</feature>
<feature type="glycosylation site" description="N-linked (GlcNAc...) asparagine" evidence="2">
    <location>
        <position position="237"/>
    </location>
</feature>
<feature type="glycosylation site" description="N-linked (GlcNAc...) asparagine" evidence="2">
    <location>
        <position position="285"/>
    </location>
</feature>
<feature type="disulfide bond" evidence="3">
    <location>
        <begin position="254"/>
        <end position="265"/>
    </location>
</feature>
<feature type="disulfide bond" evidence="3">
    <location>
        <begin position="282"/>
        <end position="372"/>
    </location>
</feature>
<feature type="disulfide bond" evidence="3">
    <location>
        <begin position="350"/>
        <end position="364"/>
    </location>
</feature>
<feature type="splice variant" id="VSP_039405" description="In isoform 2." evidence="7">
    <original>DCRRITCPEGWLPFEGKC</original>
    <variation>EFCGQGPWLSTGVLAGAE</variation>
    <location>
        <begin position="248"/>
        <end position="265"/>
    </location>
</feature>
<feature type="splice variant" id="VSP_039406" description="In isoform 2." evidence="7">
    <location>
        <begin position="266"/>
        <end position="378"/>
    </location>
</feature>
<feature type="splice variant" id="VSP_039407" description="In isoform 3." evidence="6">
    <original>NFVAKAHG</original>
    <variation>LLGARGTQ</variation>
    <location>
        <begin position="299"/>
        <end position="306"/>
    </location>
</feature>
<feature type="splice variant" id="VSP_039408" description="In isoform 3." evidence="6">
    <location>
        <begin position="307"/>
        <end position="378"/>
    </location>
</feature>